<sequence>MPAGVSWGQYLKFLGCALASMMAGSQAVHLYYKPLEDLRVYIEQEQHSTQVDPTAKPPESA</sequence>
<dbReference type="EMBL" id="AE014298">
    <property type="protein sequence ID" value="ACL82903.1"/>
    <property type="molecule type" value="Genomic_DNA"/>
</dbReference>
<dbReference type="EMBL" id="AE014298">
    <property type="protein sequence ID" value="ACL82904.1"/>
    <property type="molecule type" value="Genomic_DNA"/>
</dbReference>
<dbReference type="EMBL" id="AY113525">
    <property type="protein sequence ID" value="AGK45233.1"/>
    <property type="molecule type" value="mRNA"/>
</dbReference>
<dbReference type="RefSeq" id="NP_001138171.1">
    <property type="nucleotide sequence ID" value="NM_001144699.2"/>
</dbReference>
<dbReference type="RefSeq" id="NP_001138172.1">
    <property type="nucleotide sequence ID" value="NM_001144700.3"/>
</dbReference>
<dbReference type="SMR" id="B7Z0X7"/>
<dbReference type="FunCoup" id="B7Z0X7">
    <property type="interactions" value="10"/>
</dbReference>
<dbReference type="PaxDb" id="7227-FBpp0288972"/>
<dbReference type="DNASU" id="7354414"/>
<dbReference type="EnsemblMetazoa" id="FBtr0299694">
    <property type="protein sequence ID" value="FBpp0288972"/>
    <property type="gene ID" value="FBgn0259204"/>
</dbReference>
<dbReference type="EnsemblMetazoa" id="FBtr0299695">
    <property type="protein sequence ID" value="FBpp0288973"/>
    <property type="gene ID" value="FBgn0259204"/>
</dbReference>
<dbReference type="GeneID" id="7354414"/>
<dbReference type="KEGG" id="dme:Dmel_CG42308"/>
<dbReference type="AGR" id="FB:FBgn0259204"/>
<dbReference type="CTD" id="7354414"/>
<dbReference type="FlyBase" id="FBgn0259204">
    <property type="gene designation" value="sloth2"/>
</dbReference>
<dbReference type="VEuPathDB" id="VectorBase:FBgn0259204"/>
<dbReference type="eggNOG" id="ENOG502S9EP">
    <property type="taxonomic scope" value="Eukaryota"/>
</dbReference>
<dbReference type="HOGENOM" id="CLU_204806_0_0_1"/>
<dbReference type="OMA" id="YMKFLGC"/>
<dbReference type="OrthoDB" id="6139781at2759"/>
<dbReference type="BioGRID-ORCS" id="7354414">
    <property type="hits" value="1 hit in 1 CRISPR screen"/>
</dbReference>
<dbReference type="GenomeRNAi" id="7354414"/>
<dbReference type="Proteomes" id="UP000000803">
    <property type="component" value="Chromosome X"/>
</dbReference>
<dbReference type="Bgee" id="FBgn0259204">
    <property type="expression patterns" value="Expressed in insect adult head and 12 other cell types or tissues"/>
</dbReference>
<dbReference type="GO" id="GO:0016020">
    <property type="term" value="C:membrane"/>
    <property type="evidence" value="ECO:0000255"/>
    <property type="project" value="FlyBase"/>
</dbReference>
<dbReference type="GO" id="GO:0005743">
    <property type="term" value="C:mitochondrial inner membrane"/>
    <property type="evidence" value="ECO:0000250"/>
    <property type="project" value="FlyBase"/>
</dbReference>
<dbReference type="GO" id="GO:0005739">
    <property type="term" value="C:mitochondrion"/>
    <property type="evidence" value="ECO:0000314"/>
    <property type="project" value="FlyBase"/>
</dbReference>
<dbReference type="GO" id="GO:0044877">
    <property type="term" value="F:protein-containing complex binding"/>
    <property type="evidence" value="ECO:0000314"/>
    <property type="project" value="FlyBase"/>
</dbReference>
<dbReference type="GO" id="GO:0034551">
    <property type="term" value="P:mitochondrial respiratory chain complex III assembly"/>
    <property type="evidence" value="ECO:0000316"/>
    <property type="project" value="FlyBase"/>
</dbReference>
<dbReference type="InterPro" id="IPR027858">
    <property type="entry name" value="BRAWNIN"/>
</dbReference>
<dbReference type="PANTHER" id="PTHR28492">
    <property type="entry name" value="HYPOTHETICAL PROTEIN LOC691921"/>
    <property type="match status" value="1"/>
</dbReference>
<dbReference type="PANTHER" id="PTHR28492:SF1">
    <property type="entry name" value="UBIQUINOL-CYTOCHROME-C REDUCTASE COMPLEX ASSEMBLY FACTOR 6"/>
    <property type="match status" value="1"/>
</dbReference>
<dbReference type="Pfam" id="PF14990">
    <property type="entry name" value="DUF4516"/>
    <property type="match status" value="1"/>
</dbReference>
<protein>
    <recommendedName>
        <fullName evidence="1">Ubiquinol-cytochrome c reductase complex assembly factor 6</fullName>
        <shortName evidence="4">UQCC6</shortName>
    </recommendedName>
</protein>
<accession>B7Z0X7</accession>
<organism evidence="7">
    <name type="scientific">Drosophila melanogaster</name>
    <name type="common">Fruit fly</name>
    <dbReference type="NCBI Taxonomy" id="7227"/>
    <lineage>
        <taxon>Eukaryota</taxon>
        <taxon>Metazoa</taxon>
        <taxon>Ecdysozoa</taxon>
        <taxon>Arthropoda</taxon>
        <taxon>Hexapoda</taxon>
        <taxon>Insecta</taxon>
        <taxon>Pterygota</taxon>
        <taxon>Neoptera</taxon>
        <taxon>Endopterygota</taxon>
        <taxon>Diptera</taxon>
        <taxon>Brachycera</taxon>
        <taxon>Muscomorpha</taxon>
        <taxon>Ephydroidea</taxon>
        <taxon>Drosophilidae</taxon>
        <taxon>Drosophila</taxon>
        <taxon>Sophophora</taxon>
    </lineage>
</organism>
<evidence type="ECO:0000250" key="1">
    <source>
        <dbReference type="UniProtKB" id="Q69YU5"/>
    </source>
</evidence>
<evidence type="ECO:0000255" key="2"/>
<evidence type="ECO:0000269" key="3">
    <source>
    </source>
</evidence>
<evidence type="ECO:0000305" key="4"/>
<evidence type="ECO:0000312" key="5">
    <source>
        <dbReference type="EMBL" id="AGK45233.1"/>
    </source>
</evidence>
<evidence type="ECO:0000312" key="6">
    <source>
        <dbReference type="FlyBase" id="FBgn0259204"/>
    </source>
</evidence>
<evidence type="ECO:0000312" key="7">
    <source>
        <dbReference type="Proteomes" id="UP000000803"/>
    </source>
</evidence>
<feature type="chain" id="PRO_0000460645" description="Ubiquinol-cytochrome c reductase complex assembly factor 6">
    <location>
        <begin position="1"/>
        <end position="61"/>
    </location>
</feature>
<feature type="topological domain" description="Mitochondrial matrix" evidence="1">
    <location>
        <begin position="1"/>
        <end position="9"/>
    </location>
</feature>
<feature type="transmembrane region" description="Helical" evidence="2">
    <location>
        <begin position="10"/>
        <end position="32"/>
    </location>
</feature>
<feature type="topological domain" description="Mitochondrial intermembrane" evidence="1">
    <location>
        <begin position="33"/>
        <end position="61"/>
    </location>
</feature>
<gene>
    <name evidence="6" type="primary">sloth2</name>
    <name evidence="6" type="ORF">CG42308</name>
</gene>
<reference evidence="7" key="1">
    <citation type="journal article" date="2000" name="Science">
        <title>The genome sequence of Drosophila melanogaster.</title>
        <authorList>
            <person name="Adams M.D."/>
            <person name="Celniker S.E."/>
            <person name="Holt R.A."/>
            <person name="Evans C.A."/>
            <person name="Gocayne J.D."/>
            <person name="Amanatides P.G."/>
            <person name="Scherer S.E."/>
            <person name="Li P.W."/>
            <person name="Hoskins R.A."/>
            <person name="Galle R.F."/>
            <person name="George R.A."/>
            <person name="Lewis S.E."/>
            <person name="Richards S."/>
            <person name="Ashburner M."/>
            <person name="Henderson S.N."/>
            <person name="Sutton G.G."/>
            <person name="Wortman J.R."/>
            <person name="Yandell M.D."/>
            <person name="Zhang Q."/>
            <person name="Chen L.X."/>
            <person name="Brandon R.C."/>
            <person name="Rogers Y.-H.C."/>
            <person name="Blazej R.G."/>
            <person name="Champe M."/>
            <person name="Pfeiffer B.D."/>
            <person name="Wan K.H."/>
            <person name="Doyle C."/>
            <person name="Baxter E.G."/>
            <person name="Helt G."/>
            <person name="Nelson C.R."/>
            <person name="Miklos G.L.G."/>
            <person name="Abril J.F."/>
            <person name="Agbayani A."/>
            <person name="An H.-J."/>
            <person name="Andrews-Pfannkoch C."/>
            <person name="Baldwin D."/>
            <person name="Ballew R.M."/>
            <person name="Basu A."/>
            <person name="Baxendale J."/>
            <person name="Bayraktaroglu L."/>
            <person name="Beasley E.M."/>
            <person name="Beeson K.Y."/>
            <person name="Benos P.V."/>
            <person name="Berman B.P."/>
            <person name="Bhandari D."/>
            <person name="Bolshakov S."/>
            <person name="Borkova D."/>
            <person name="Botchan M.R."/>
            <person name="Bouck J."/>
            <person name="Brokstein P."/>
            <person name="Brottier P."/>
            <person name="Burtis K.C."/>
            <person name="Busam D.A."/>
            <person name="Butler H."/>
            <person name="Cadieu E."/>
            <person name="Center A."/>
            <person name="Chandra I."/>
            <person name="Cherry J.M."/>
            <person name="Cawley S."/>
            <person name="Dahlke C."/>
            <person name="Davenport L.B."/>
            <person name="Davies P."/>
            <person name="de Pablos B."/>
            <person name="Delcher A."/>
            <person name="Deng Z."/>
            <person name="Mays A.D."/>
            <person name="Dew I."/>
            <person name="Dietz S.M."/>
            <person name="Dodson K."/>
            <person name="Doup L.E."/>
            <person name="Downes M."/>
            <person name="Dugan-Rocha S."/>
            <person name="Dunkov B.C."/>
            <person name="Dunn P."/>
            <person name="Durbin K.J."/>
            <person name="Evangelista C.C."/>
            <person name="Ferraz C."/>
            <person name="Ferriera S."/>
            <person name="Fleischmann W."/>
            <person name="Fosler C."/>
            <person name="Gabrielian A.E."/>
            <person name="Garg N.S."/>
            <person name="Gelbart W.M."/>
            <person name="Glasser K."/>
            <person name="Glodek A."/>
            <person name="Gong F."/>
            <person name="Gorrell J.H."/>
            <person name="Gu Z."/>
            <person name="Guan P."/>
            <person name="Harris M."/>
            <person name="Harris N.L."/>
            <person name="Harvey D.A."/>
            <person name="Heiman T.J."/>
            <person name="Hernandez J.R."/>
            <person name="Houck J."/>
            <person name="Hostin D."/>
            <person name="Houston K.A."/>
            <person name="Howland T.J."/>
            <person name="Wei M.-H."/>
            <person name="Ibegwam C."/>
            <person name="Jalali M."/>
            <person name="Kalush F."/>
            <person name="Karpen G.H."/>
            <person name="Ke Z."/>
            <person name="Kennison J.A."/>
            <person name="Ketchum K.A."/>
            <person name="Kimmel B.E."/>
            <person name="Kodira C.D."/>
            <person name="Kraft C.L."/>
            <person name="Kravitz S."/>
            <person name="Kulp D."/>
            <person name="Lai Z."/>
            <person name="Lasko P."/>
            <person name="Lei Y."/>
            <person name="Levitsky A.A."/>
            <person name="Li J.H."/>
            <person name="Li Z."/>
            <person name="Liang Y."/>
            <person name="Lin X."/>
            <person name="Liu X."/>
            <person name="Mattei B."/>
            <person name="McIntosh T.C."/>
            <person name="McLeod M.P."/>
            <person name="McPherson D."/>
            <person name="Merkulov G."/>
            <person name="Milshina N.V."/>
            <person name="Mobarry C."/>
            <person name="Morris J."/>
            <person name="Moshrefi A."/>
            <person name="Mount S.M."/>
            <person name="Moy M."/>
            <person name="Murphy B."/>
            <person name="Murphy L."/>
            <person name="Muzny D.M."/>
            <person name="Nelson D.L."/>
            <person name="Nelson D.R."/>
            <person name="Nelson K.A."/>
            <person name="Nixon K."/>
            <person name="Nusskern D.R."/>
            <person name="Pacleb J.M."/>
            <person name="Palazzolo M."/>
            <person name="Pittman G.S."/>
            <person name="Pan S."/>
            <person name="Pollard J."/>
            <person name="Puri V."/>
            <person name="Reese M.G."/>
            <person name="Reinert K."/>
            <person name="Remington K."/>
            <person name="Saunders R.D.C."/>
            <person name="Scheeler F."/>
            <person name="Shen H."/>
            <person name="Shue B.C."/>
            <person name="Siden-Kiamos I."/>
            <person name="Simpson M."/>
            <person name="Skupski M.P."/>
            <person name="Smith T.J."/>
            <person name="Spier E."/>
            <person name="Spradling A.C."/>
            <person name="Stapleton M."/>
            <person name="Strong R."/>
            <person name="Sun E."/>
            <person name="Svirskas R."/>
            <person name="Tector C."/>
            <person name="Turner R."/>
            <person name="Venter E."/>
            <person name="Wang A.H."/>
            <person name="Wang X."/>
            <person name="Wang Z.-Y."/>
            <person name="Wassarman D.A."/>
            <person name="Weinstock G.M."/>
            <person name="Weissenbach J."/>
            <person name="Williams S.M."/>
            <person name="Woodage T."/>
            <person name="Worley K.C."/>
            <person name="Wu D."/>
            <person name="Yang S."/>
            <person name="Yao Q.A."/>
            <person name="Ye J."/>
            <person name="Yeh R.-F."/>
            <person name="Zaveri J.S."/>
            <person name="Zhan M."/>
            <person name="Zhang G."/>
            <person name="Zhao Q."/>
            <person name="Zheng L."/>
            <person name="Zheng X.H."/>
            <person name="Zhong F.N."/>
            <person name="Zhong W."/>
            <person name="Zhou X."/>
            <person name="Zhu S.C."/>
            <person name="Zhu X."/>
            <person name="Smith H.O."/>
            <person name="Gibbs R.A."/>
            <person name="Myers E.W."/>
            <person name="Rubin G.M."/>
            <person name="Venter J.C."/>
        </authorList>
    </citation>
    <scope>NUCLEOTIDE SEQUENCE [LARGE SCALE GENOMIC DNA]</scope>
    <source>
        <strain evidence="7">Berkeley</strain>
    </source>
</reference>
<reference evidence="7" key="2">
    <citation type="journal article" date="2002" name="Genome Biol.">
        <title>Annotation of the Drosophila melanogaster euchromatic genome: a systematic review.</title>
        <authorList>
            <person name="Misra S."/>
            <person name="Crosby M.A."/>
            <person name="Mungall C.J."/>
            <person name="Matthews B.B."/>
            <person name="Campbell K.S."/>
            <person name="Hradecky P."/>
            <person name="Huang Y."/>
            <person name="Kaminker J.S."/>
            <person name="Millburn G.H."/>
            <person name="Prochnik S.E."/>
            <person name="Smith C.D."/>
            <person name="Tupy J.L."/>
            <person name="Whitfield E.J."/>
            <person name="Bayraktaroglu L."/>
            <person name="Berman B.P."/>
            <person name="Bettencourt B.R."/>
            <person name="Celniker S.E."/>
            <person name="de Grey A.D.N.J."/>
            <person name="Drysdale R.A."/>
            <person name="Harris N.L."/>
            <person name="Richter J."/>
            <person name="Russo S."/>
            <person name="Schroeder A.J."/>
            <person name="Shu S.Q."/>
            <person name="Stapleton M."/>
            <person name="Yamada C."/>
            <person name="Ashburner M."/>
            <person name="Gelbart W.M."/>
            <person name="Rubin G.M."/>
            <person name="Lewis S.E."/>
        </authorList>
    </citation>
    <scope>GENOME REANNOTATION</scope>
    <source>
        <strain evidence="7">Berkeley</strain>
    </source>
</reference>
<reference evidence="5" key="3">
    <citation type="submission" date="2013-04" db="EMBL/GenBank/DDBJ databases">
        <authorList>
            <person name="Carlson J."/>
            <person name="Booth B."/>
            <person name="Frise E."/>
            <person name="Park S."/>
            <person name="Wan K."/>
            <person name="Yu C."/>
            <person name="Celniker S."/>
        </authorList>
    </citation>
    <scope>NUCLEOTIDE SEQUENCE [LARGE SCALE MRNA]</scope>
    <source>
        <strain evidence="5">Berkeley</strain>
    </source>
</reference>
<reference evidence="4" key="4">
    <citation type="journal article" date="2022" name="Elife">
        <title>Two neuronal peptides encoded from a single transcript regulate mitochondrial complex III in Drosophila.</title>
        <authorList>
            <person name="Bosch J.A."/>
            <person name="Ugur B."/>
            <person name="Pichardo-Casas I."/>
            <person name="Rabasco J."/>
            <person name="Escobedo F."/>
            <person name="Zuo Z."/>
            <person name="Brown B."/>
            <person name="Celniker S."/>
            <person name="Sinclair D.A."/>
            <person name="Bellen H.J."/>
            <person name="Perrimon N."/>
        </authorList>
    </citation>
    <scope>FUNCTION</scope>
    <scope>INTERACTION WITH SLOTH1</scope>
    <scope>SUBCELLULAR LOCATION</scope>
    <scope>TISSUE SPECIFICITY</scope>
    <scope>DEVELOPMENTAL STAGE</scope>
    <scope>DISRUPTION PHENOTYPE</scope>
</reference>
<keyword id="KW-0472">Membrane</keyword>
<keyword id="KW-0496">Mitochondrion</keyword>
<keyword id="KW-0999">Mitochondrion inner membrane</keyword>
<keyword id="KW-1185">Reference proteome</keyword>
<keyword id="KW-0812">Transmembrane</keyword>
<keyword id="KW-1133">Transmembrane helix</keyword>
<comment type="function">
    <text evidence="3">Required for the assembly and stability of the mitochondrial ubiquinol-cytochrome c reductase complex (complex III (CIII) or cytochrome b-c1 complex), a multisubunit transmembrane complex that is part of the mitochondrial electron transport chain (ETC) which drives oxidative phosphorylation.</text>
</comment>
<comment type="subunit">
    <text evidence="3">Interacts with sloth1; the interaction stabilizes both components.</text>
</comment>
<comment type="subcellular location">
    <subcellularLocation>
        <location evidence="1">Mitochondrion inner membrane</location>
        <topology evidence="2">Single-pass membrane protein</topology>
    </subcellularLocation>
    <subcellularLocation>
        <location evidence="3">Mitochondrion</location>
    </subcellularLocation>
</comment>
<comment type="tissue specificity">
    <text evidence="3">Expressed in the brain.</text>
</comment>
<comment type="developmental stage">
    <text evidence="3">In 3rd instar larvae, expressed in motor neurons at the neuromuscular junction and a subset of neuronal cells in the brain.</text>
</comment>
<comment type="disruption phenotype">
    <text evidence="3">Adult lethal, mainly due to flies becoming stuck in the food medium post eclosion (PubMed:36346220). Rare escaper adult flies have slow motor activity, reduced climbing ability and short scutellar bristles (PubMed:36346220). Larval motor neurons and adult photoreceptors have a reduced ability to maintain a synaptic response upon repeated stimulation (PubMed:36346220). Impaired mitochondrial function in larvae (PubMed:36346220).</text>
</comment>
<comment type="miscellaneous">
    <text evidence="3">Expressed from one of two small open reading frames (smORFs) encoded by a bicistronic transcript. The ORF for sloth1 has a non-canonical Kozak sequence while the ORF for sloth2 has a classical optimal Kozak sequence. Both ORFs are expressed because ribosomes occasionally fail to initiate translation of sloth1 and continue scanning to initiate translation of sloth2, a process known as 'leaky scanning'.</text>
</comment>
<comment type="miscellaneous">
    <text evidence="4">The 'sloth' peptides were named for the slow movement phenotype of mutant flies.</text>
</comment>
<comment type="similarity">
    <text evidence="4">Belongs to the UQCC6 family.</text>
</comment>
<name>UQCC6_DROME</name>
<proteinExistence type="evidence at protein level"/>